<name>KRM_FRACC</name>
<dbReference type="EC" id="2.1.1.179"/>
<dbReference type="EMBL" id="CP000249">
    <property type="protein sequence ID" value="ABD12727.1"/>
    <property type="molecule type" value="Genomic_DNA"/>
</dbReference>
<dbReference type="SMR" id="Q2J7L5"/>
<dbReference type="STRING" id="106370.Francci3_3372"/>
<dbReference type="KEGG" id="fra:Francci3_3372"/>
<dbReference type="eggNOG" id="ENOG5033S4K">
    <property type="taxonomic scope" value="Bacteria"/>
</dbReference>
<dbReference type="HOGENOM" id="CLU_1044669_0_0_11"/>
<dbReference type="OrthoDB" id="3352509at2"/>
<dbReference type="BRENDA" id="2.1.1.179">
    <property type="organism ID" value="2325"/>
</dbReference>
<dbReference type="Proteomes" id="UP000001937">
    <property type="component" value="Chromosome"/>
</dbReference>
<dbReference type="GO" id="GO:0008649">
    <property type="term" value="F:rRNA methyltransferase activity"/>
    <property type="evidence" value="ECO:0007669"/>
    <property type="project" value="InterPro"/>
</dbReference>
<dbReference type="GO" id="GO:0046677">
    <property type="term" value="P:response to antibiotic"/>
    <property type="evidence" value="ECO:0007669"/>
    <property type="project" value="UniProtKB-KW"/>
</dbReference>
<dbReference type="Gene3D" id="1.10.8.10">
    <property type="entry name" value="DNA helicase RuvA subunit, C-terminal domain"/>
    <property type="match status" value="1"/>
</dbReference>
<dbReference type="Gene3D" id="3.40.50.150">
    <property type="entry name" value="Vaccinia Virus protein VP39"/>
    <property type="match status" value="1"/>
</dbReference>
<dbReference type="InterPro" id="IPR025981">
    <property type="entry name" value="rRNA_MeTrfase"/>
</dbReference>
<dbReference type="InterPro" id="IPR010769">
    <property type="entry name" value="rRNA_MeTrfase_GmN_bac"/>
</dbReference>
<dbReference type="InterPro" id="IPR029063">
    <property type="entry name" value="SAM-dependent_MTases_sf"/>
</dbReference>
<dbReference type="NCBIfam" id="NF000466">
    <property type="entry name" value="16S_rRNA_Rmt_gen"/>
    <property type="match status" value="1"/>
</dbReference>
<dbReference type="Pfam" id="PF07091">
    <property type="entry name" value="FmrO"/>
    <property type="match status" value="1"/>
</dbReference>
<dbReference type="PIRSF" id="PIRSF015852">
    <property type="entry name" value="RRNA_mtase_Grm"/>
    <property type="match status" value="1"/>
</dbReference>
<keyword id="KW-0046">Antibiotic resistance</keyword>
<keyword id="KW-0489">Methyltransferase</keyword>
<keyword id="KW-1185">Reference proteome</keyword>
<keyword id="KW-0698">rRNA processing</keyword>
<keyword id="KW-0949">S-adenosyl-L-methionine</keyword>
<keyword id="KW-0808">Transferase</keyword>
<feature type="chain" id="PRO_0000416816" description="16S rRNA (guanine(1405)-N(7))-methyltransferase">
    <location>
        <begin position="1"/>
        <end position="284"/>
    </location>
</feature>
<feature type="binding site" evidence="1">
    <location>
        <position position="73"/>
    </location>
    <ligand>
        <name>S-adenosyl-L-methionine</name>
        <dbReference type="ChEBI" id="CHEBI:59789"/>
    </ligand>
</feature>
<feature type="binding site" evidence="1">
    <location>
        <begin position="111"/>
        <end position="113"/>
    </location>
    <ligand>
        <name>S-adenosyl-L-methionine</name>
        <dbReference type="ChEBI" id="CHEBI:59789"/>
    </ligand>
</feature>
<feature type="binding site" evidence="1">
    <location>
        <position position="117"/>
    </location>
    <ligand>
        <name>S-adenosyl-L-methionine</name>
        <dbReference type="ChEBI" id="CHEBI:59789"/>
    </ligand>
</feature>
<feature type="binding site" evidence="1">
    <location>
        <position position="142"/>
    </location>
    <ligand>
        <name>S-adenosyl-L-methionine</name>
        <dbReference type="ChEBI" id="CHEBI:59789"/>
    </ligand>
</feature>
<feature type="binding site" evidence="1">
    <location>
        <position position="165"/>
    </location>
    <ligand>
        <name>S-adenosyl-L-methionine</name>
        <dbReference type="ChEBI" id="CHEBI:59789"/>
    </ligand>
</feature>
<feature type="binding site" evidence="1">
    <location>
        <begin position="191"/>
        <end position="192"/>
    </location>
    <ligand>
        <name>S-adenosyl-L-methionine</name>
        <dbReference type="ChEBI" id="CHEBI:59789"/>
    </ligand>
</feature>
<feature type="binding site" evidence="1">
    <location>
        <position position="208"/>
    </location>
    <ligand>
        <name>S-adenosyl-L-methionine</name>
        <dbReference type="ChEBI" id="CHEBI:59789"/>
    </ligand>
</feature>
<feature type="binding site" evidence="1">
    <location>
        <position position="217"/>
    </location>
    <ligand>
        <name>S-adenosyl-L-methionine</name>
        <dbReference type="ChEBI" id="CHEBI:59789"/>
    </ligand>
</feature>
<comment type="function">
    <text evidence="2">Specifically methylates the N(7) position of guanine 1405 in 16S rRNA. Confers resistance to various aminoglycosides, including gentamicin and kanamycin.</text>
</comment>
<comment type="catalytic activity">
    <reaction evidence="2">
        <text>guanosine(1405) in 16S rRNA + S-adenosyl-L-methionine = N(7)-methylguanosine(1405) in 16S rRNA + S-adenosyl-L-homocysteine</text>
        <dbReference type="Rhea" id="RHEA:42772"/>
        <dbReference type="Rhea" id="RHEA-COMP:10225"/>
        <dbReference type="Rhea" id="RHEA-COMP:10226"/>
        <dbReference type="ChEBI" id="CHEBI:57856"/>
        <dbReference type="ChEBI" id="CHEBI:59789"/>
        <dbReference type="ChEBI" id="CHEBI:74269"/>
        <dbReference type="ChEBI" id="CHEBI:74480"/>
        <dbReference type="EC" id="2.1.1.179"/>
    </reaction>
</comment>
<comment type="miscellaneous">
    <text>Protects Frankia sp., which is an antibiotic-producing bacterium, against self-intoxication.</text>
</comment>
<comment type="similarity">
    <text evidence="3">Belongs to the methyltransferase superfamily. Aminoglycoside resistance family.</text>
</comment>
<accession>Q2J7L5</accession>
<evidence type="ECO:0000250" key="1"/>
<evidence type="ECO:0000269" key="2">
    <source>
    </source>
</evidence>
<evidence type="ECO:0000305" key="3"/>
<proteinExistence type="evidence at protein level"/>
<sequence>MAVRDGGGSAPVGSQEQAVDRVRETVARSRRYGAVAPETVRRLAERALVASRGDEPEAVKRTKRSLHEIYGAYLPERAPGYPGLLRDIGAAVGGGDPDAVAAAVSRAMRVHASTRERLPYLREFYAAVFGAVPTPAVVQDLACGLNPLAFGSMGLPAQTTYLASDIDSQQMEFLDRALDLLEVEHRVEVVDLVSGAVPAQHADVTLVLKTLPLLERQRAGAGWELVDALRSPFVVVSFPTRSLGQRSKGMFQTYSAAFEAQAAERGWTFDQAEIANELIYIVRR</sequence>
<gene>
    <name type="primary">Krm</name>
    <name type="ordered locus">Francci3_3372</name>
</gene>
<protein>
    <recommendedName>
        <fullName>16S rRNA (guanine(1405)-N(7))-methyltransferase</fullName>
        <ecNumber>2.1.1.179</ecNumber>
    </recommendedName>
    <alternativeName>
        <fullName>16S rRNA m7G1405 methyltransferase</fullName>
    </alternativeName>
</protein>
<reference key="1">
    <citation type="journal article" date="2007" name="Genome Res.">
        <title>Genome characteristics of facultatively symbiotic Frankia sp. strains reflect host range and host plant biogeography.</title>
        <authorList>
            <person name="Normand P."/>
            <person name="Lapierre P."/>
            <person name="Tisa L.S."/>
            <person name="Gogarten J.P."/>
            <person name="Alloisio N."/>
            <person name="Bagnarol E."/>
            <person name="Bassi C.A."/>
            <person name="Berry A.M."/>
            <person name="Bickhart D.M."/>
            <person name="Choisne N."/>
            <person name="Couloux A."/>
            <person name="Cournoyer B."/>
            <person name="Cruveiller S."/>
            <person name="Daubin V."/>
            <person name="Demange N."/>
            <person name="Francino M.P."/>
            <person name="Goltsman E."/>
            <person name="Huang Y."/>
            <person name="Kopp O.R."/>
            <person name="Labarre L."/>
            <person name="Lapidus A."/>
            <person name="Lavire C."/>
            <person name="Marechal J."/>
            <person name="Martinez M."/>
            <person name="Mastronunzio J.E."/>
            <person name="Mullin B.C."/>
            <person name="Niemann J."/>
            <person name="Pujic P."/>
            <person name="Rawnsley T."/>
            <person name="Rouy Z."/>
            <person name="Schenowitz C."/>
            <person name="Sellstedt A."/>
            <person name="Tavares F."/>
            <person name="Tomkins J.P."/>
            <person name="Vallenet D."/>
            <person name="Valverde C."/>
            <person name="Wall L.G."/>
            <person name="Wang Y."/>
            <person name="Medigue C."/>
            <person name="Benson D.R."/>
        </authorList>
    </citation>
    <scope>NUCLEOTIDE SEQUENCE [LARGE SCALE GENOMIC DNA]</scope>
    <source>
        <strain>DSM 45818 / CECT 9043 / HFP020203 / CcI3</strain>
    </source>
</reference>
<reference key="2">
    <citation type="journal article" date="2009" name="Nucleic Acids Res.">
        <title>Determination of the target nucleosides for members of two families of 16S rRNA methyltransferases that confer resistance to partially overlapping groups of aminoglycoside antibiotics.</title>
        <authorList>
            <person name="Savic M."/>
            <person name="Lovric J."/>
            <person name="Tomic T.I."/>
            <person name="Vasiljevic B."/>
            <person name="Conn G.L."/>
        </authorList>
    </citation>
    <scope>FUNCTION</scope>
    <scope>CATALYTIC ACTIVITY</scope>
</reference>
<organism>
    <name type="scientific">Frankia casuarinae (strain DSM 45818 / CECT 9043 / HFP020203 / CcI3)</name>
    <dbReference type="NCBI Taxonomy" id="106370"/>
    <lineage>
        <taxon>Bacteria</taxon>
        <taxon>Bacillati</taxon>
        <taxon>Actinomycetota</taxon>
        <taxon>Actinomycetes</taxon>
        <taxon>Frankiales</taxon>
        <taxon>Frankiaceae</taxon>
        <taxon>Frankia</taxon>
    </lineage>
</organism>